<keyword id="KW-0071">Autoinducer synthesis</keyword>
<keyword id="KW-0408">Iron</keyword>
<keyword id="KW-0456">Lyase</keyword>
<keyword id="KW-0479">Metal-binding</keyword>
<keyword id="KW-0673">Quorum sensing</keyword>
<evidence type="ECO:0000255" key="1">
    <source>
        <dbReference type="HAMAP-Rule" id="MF_00091"/>
    </source>
</evidence>
<comment type="function">
    <text evidence="1">Involved in the synthesis of autoinducer 2 (AI-2) which is secreted by bacteria and is used to communicate both the cell density and the metabolic potential of the environment. The regulation of gene expression in response to changes in cell density is called quorum sensing. Catalyzes the transformation of S-ribosylhomocysteine (RHC) to homocysteine (HC) and 4,5-dihydroxy-2,3-pentadione (DPD).</text>
</comment>
<comment type="catalytic activity">
    <reaction evidence="1">
        <text>S-(5-deoxy-D-ribos-5-yl)-L-homocysteine = (S)-4,5-dihydroxypentane-2,3-dione + L-homocysteine</text>
        <dbReference type="Rhea" id="RHEA:17753"/>
        <dbReference type="ChEBI" id="CHEBI:29484"/>
        <dbReference type="ChEBI" id="CHEBI:58195"/>
        <dbReference type="ChEBI" id="CHEBI:58199"/>
        <dbReference type="EC" id="4.4.1.21"/>
    </reaction>
</comment>
<comment type="cofactor">
    <cofactor evidence="1">
        <name>Fe cation</name>
        <dbReference type="ChEBI" id="CHEBI:24875"/>
    </cofactor>
    <text evidence="1">Binds 1 Fe cation per subunit.</text>
</comment>
<comment type="subunit">
    <text evidence="1">Homodimer.</text>
</comment>
<comment type="similarity">
    <text evidence="1">Belongs to the LuxS family.</text>
</comment>
<gene>
    <name evidence="1" type="primary">luxS</name>
    <name type="ordered locus">BCB4264_A4917</name>
</gene>
<dbReference type="EC" id="4.4.1.21" evidence="1"/>
<dbReference type="EMBL" id="CP001176">
    <property type="protein sequence ID" value="ACK60187.1"/>
    <property type="molecule type" value="Genomic_DNA"/>
</dbReference>
<dbReference type="RefSeq" id="WP_001141371.1">
    <property type="nucleotide sequence ID" value="NZ_VEHB01000005.1"/>
</dbReference>
<dbReference type="SMR" id="B7H9G6"/>
<dbReference type="GeneID" id="92884602"/>
<dbReference type="KEGG" id="bcb:BCB4264_A4917"/>
<dbReference type="HOGENOM" id="CLU_107531_2_0_9"/>
<dbReference type="Proteomes" id="UP000007096">
    <property type="component" value="Chromosome"/>
</dbReference>
<dbReference type="GO" id="GO:0005506">
    <property type="term" value="F:iron ion binding"/>
    <property type="evidence" value="ECO:0007669"/>
    <property type="project" value="InterPro"/>
</dbReference>
<dbReference type="GO" id="GO:0043768">
    <property type="term" value="F:S-ribosylhomocysteine lyase activity"/>
    <property type="evidence" value="ECO:0007669"/>
    <property type="project" value="UniProtKB-UniRule"/>
</dbReference>
<dbReference type="GO" id="GO:0009372">
    <property type="term" value="P:quorum sensing"/>
    <property type="evidence" value="ECO:0007669"/>
    <property type="project" value="UniProtKB-UniRule"/>
</dbReference>
<dbReference type="Gene3D" id="3.30.1360.80">
    <property type="entry name" value="S-ribosylhomocysteinase (LuxS)"/>
    <property type="match status" value="1"/>
</dbReference>
<dbReference type="HAMAP" id="MF_00091">
    <property type="entry name" value="LuxS"/>
    <property type="match status" value="1"/>
</dbReference>
<dbReference type="InterPro" id="IPR037005">
    <property type="entry name" value="LuxS_sf"/>
</dbReference>
<dbReference type="InterPro" id="IPR011249">
    <property type="entry name" value="Metalloenz_LuxS/M16"/>
</dbReference>
<dbReference type="InterPro" id="IPR003815">
    <property type="entry name" value="S-ribosylhomocysteinase"/>
</dbReference>
<dbReference type="NCBIfam" id="NF002603">
    <property type="entry name" value="PRK02260.1-3"/>
    <property type="match status" value="1"/>
</dbReference>
<dbReference type="PANTHER" id="PTHR35799">
    <property type="entry name" value="S-RIBOSYLHOMOCYSTEINE LYASE"/>
    <property type="match status" value="1"/>
</dbReference>
<dbReference type="PANTHER" id="PTHR35799:SF1">
    <property type="entry name" value="S-RIBOSYLHOMOCYSTEINE LYASE"/>
    <property type="match status" value="1"/>
</dbReference>
<dbReference type="Pfam" id="PF02664">
    <property type="entry name" value="LuxS"/>
    <property type="match status" value="1"/>
</dbReference>
<dbReference type="PIRSF" id="PIRSF006160">
    <property type="entry name" value="AI2"/>
    <property type="match status" value="1"/>
</dbReference>
<dbReference type="PRINTS" id="PR01487">
    <property type="entry name" value="LUXSPROTEIN"/>
</dbReference>
<dbReference type="SUPFAM" id="SSF63411">
    <property type="entry name" value="LuxS/MPP-like metallohydrolase"/>
    <property type="match status" value="1"/>
</dbReference>
<protein>
    <recommendedName>
        <fullName evidence="1">S-ribosylhomocysteine lyase</fullName>
        <ecNumber evidence="1">4.4.1.21</ecNumber>
    </recommendedName>
    <alternativeName>
        <fullName evidence="1">AI-2 synthesis protein</fullName>
    </alternativeName>
    <alternativeName>
        <fullName evidence="1">Autoinducer-2 production protein LuxS</fullName>
    </alternativeName>
</protein>
<proteinExistence type="inferred from homology"/>
<feature type="chain" id="PRO_1000117214" description="S-ribosylhomocysteine lyase">
    <location>
        <begin position="1"/>
        <end position="157"/>
    </location>
</feature>
<feature type="binding site" evidence="1">
    <location>
        <position position="54"/>
    </location>
    <ligand>
        <name>Fe cation</name>
        <dbReference type="ChEBI" id="CHEBI:24875"/>
    </ligand>
</feature>
<feature type="binding site" evidence="1">
    <location>
        <position position="58"/>
    </location>
    <ligand>
        <name>Fe cation</name>
        <dbReference type="ChEBI" id="CHEBI:24875"/>
    </ligand>
</feature>
<feature type="binding site" evidence="1">
    <location>
        <position position="126"/>
    </location>
    <ligand>
        <name>Fe cation</name>
        <dbReference type="ChEBI" id="CHEBI:24875"/>
    </ligand>
</feature>
<accession>B7H9G6</accession>
<organism>
    <name type="scientific">Bacillus cereus (strain B4264)</name>
    <dbReference type="NCBI Taxonomy" id="405532"/>
    <lineage>
        <taxon>Bacteria</taxon>
        <taxon>Bacillati</taxon>
        <taxon>Bacillota</taxon>
        <taxon>Bacilli</taxon>
        <taxon>Bacillales</taxon>
        <taxon>Bacillaceae</taxon>
        <taxon>Bacillus</taxon>
        <taxon>Bacillus cereus group</taxon>
    </lineage>
</organism>
<sequence>MPSVESFELDHTIVKAPYVRHCGVHNVGSDGIVNKFDIRFCQPNKQAMKPDVIHTLEHLLAFNLRKYIDRYPHFDIIDISPMGCQTGYYLVVSGTPTVREIIDLLELTLKDAVQITEIPAANETQCGQAKLHDLEGAQRLMNFWLSQDKDELEKVFG</sequence>
<reference key="1">
    <citation type="submission" date="2008-10" db="EMBL/GenBank/DDBJ databases">
        <title>Genome sequence of Bacillus cereus B4264.</title>
        <authorList>
            <person name="Dodson R.J."/>
            <person name="Durkin A.S."/>
            <person name="Rosovitz M.J."/>
            <person name="Rasko D.A."/>
            <person name="Hoffmaster A."/>
            <person name="Ravel J."/>
            <person name="Sutton G."/>
        </authorList>
    </citation>
    <scope>NUCLEOTIDE SEQUENCE [LARGE SCALE GENOMIC DNA]</scope>
    <source>
        <strain>B4264</strain>
    </source>
</reference>
<name>LUXS_BACC4</name>